<feature type="chain" id="PRO_1000032049" description="Elongation factor 4">
    <location>
        <begin position="1"/>
        <end position="596"/>
    </location>
</feature>
<feature type="domain" description="tr-type G">
    <location>
        <begin position="2"/>
        <end position="184"/>
    </location>
</feature>
<feature type="binding site" evidence="1">
    <location>
        <begin position="14"/>
        <end position="19"/>
    </location>
    <ligand>
        <name>GTP</name>
        <dbReference type="ChEBI" id="CHEBI:37565"/>
    </ligand>
</feature>
<feature type="binding site" evidence="1">
    <location>
        <begin position="131"/>
        <end position="134"/>
    </location>
    <ligand>
        <name>GTP</name>
        <dbReference type="ChEBI" id="CHEBI:37565"/>
    </ligand>
</feature>
<gene>
    <name evidence="1" type="primary">lepA</name>
    <name type="ordered locus">Sama_0878</name>
</gene>
<evidence type="ECO:0000255" key="1">
    <source>
        <dbReference type="HAMAP-Rule" id="MF_00071"/>
    </source>
</evidence>
<sequence length="596" mass="65842">MKHIRNFSIIAHIDHGKSTLSDRLIQVCGGLTDREMAEQVLDSMDLERERGITIKAQSVTLDYTAKNGETYQLNFIDTPGHVDFSYEVSRSLAACEGALLVVDAGQGVEAQTLANCYTALEMDLEVVPVLNKIDLPQAEPERVAAEIEDIVGIEATDAVRCSAKTGVGIGEVLETIVAQIPSPEGDPEAPLQALIIDSWFDSYLGVVSLVRIKNGVLKKGDKFKVMSTGQAYNADRVGIFTPKMKDQAELKTGQVGYVIAGIKEIHGAPVGDTLTLAKHGADKPLPGFKKAKPQVYAGVFTISTDDYESFRDALNKLSLNDASLQFEPETSSALGFGFRIGYLGLLHMEIIQERLEREYDLDLITTAPTVEYEVLLTNGETLYVDNPSDLPATNYIEEMREPIVQANILVPKEYLGNVITLCIEKRGVQKNMVYHGNQVALTYDIPAAEVVMDFFDRLKSTSRGYASLEYNFIRFEPADMVRLDVLINGDRVDALAMIIHRSNIRHKGIALVDKMKELIPRQMFDIAIQAAVGNQVVARSTVKALRKDVTAKCYGGDVSRKKKLLQKQKEGKKRMKQLGNVEVPQEAFLAVLKLNE</sequence>
<organism>
    <name type="scientific">Shewanella amazonensis (strain ATCC BAA-1098 / SB2B)</name>
    <dbReference type="NCBI Taxonomy" id="326297"/>
    <lineage>
        <taxon>Bacteria</taxon>
        <taxon>Pseudomonadati</taxon>
        <taxon>Pseudomonadota</taxon>
        <taxon>Gammaproteobacteria</taxon>
        <taxon>Alteromonadales</taxon>
        <taxon>Shewanellaceae</taxon>
        <taxon>Shewanella</taxon>
    </lineage>
</organism>
<comment type="function">
    <text evidence="1">Required for accurate and efficient protein synthesis under certain stress conditions. May act as a fidelity factor of the translation reaction, by catalyzing a one-codon backward translocation of tRNAs on improperly translocated ribosomes. Back-translocation proceeds from a post-translocation (POST) complex to a pre-translocation (PRE) complex, thus giving elongation factor G a second chance to translocate the tRNAs correctly. Binds to ribosomes in a GTP-dependent manner.</text>
</comment>
<comment type="catalytic activity">
    <reaction evidence="1">
        <text>GTP + H2O = GDP + phosphate + H(+)</text>
        <dbReference type="Rhea" id="RHEA:19669"/>
        <dbReference type="ChEBI" id="CHEBI:15377"/>
        <dbReference type="ChEBI" id="CHEBI:15378"/>
        <dbReference type="ChEBI" id="CHEBI:37565"/>
        <dbReference type="ChEBI" id="CHEBI:43474"/>
        <dbReference type="ChEBI" id="CHEBI:58189"/>
        <dbReference type="EC" id="3.6.5.n1"/>
    </reaction>
</comment>
<comment type="subcellular location">
    <subcellularLocation>
        <location evidence="1">Cell inner membrane</location>
        <topology evidence="1">Peripheral membrane protein</topology>
        <orientation evidence="1">Cytoplasmic side</orientation>
    </subcellularLocation>
</comment>
<comment type="similarity">
    <text evidence="1">Belongs to the TRAFAC class translation factor GTPase superfamily. Classic translation factor GTPase family. LepA subfamily.</text>
</comment>
<keyword id="KW-0997">Cell inner membrane</keyword>
<keyword id="KW-1003">Cell membrane</keyword>
<keyword id="KW-0342">GTP-binding</keyword>
<keyword id="KW-0378">Hydrolase</keyword>
<keyword id="KW-0472">Membrane</keyword>
<keyword id="KW-0547">Nucleotide-binding</keyword>
<keyword id="KW-0648">Protein biosynthesis</keyword>
<keyword id="KW-1185">Reference proteome</keyword>
<name>LEPA_SHEAM</name>
<accession>A1S3X9</accession>
<protein>
    <recommendedName>
        <fullName evidence="1">Elongation factor 4</fullName>
        <shortName evidence="1">EF-4</shortName>
        <ecNumber evidence="1">3.6.5.n1</ecNumber>
    </recommendedName>
    <alternativeName>
        <fullName evidence="1">Ribosomal back-translocase LepA</fullName>
    </alternativeName>
</protein>
<reference key="1">
    <citation type="submission" date="2006-12" db="EMBL/GenBank/DDBJ databases">
        <title>Complete sequence of Shewanella amazonensis SB2B.</title>
        <authorList>
            <consortium name="US DOE Joint Genome Institute"/>
            <person name="Copeland A."/>
            <person name="Lucas S."/>
            <person name="Lapidus A."/>
            <person name="Barry K."/>
            <person name="Detter J.C."/>
            <person name="Glavina del Rio T."/>
            <person name="Hammon N."/>
            <person name="Israni S."/>
            <person name="Dalin E."/>
            <person name="Tice H."/>
            <person name="Pitluck S."/>
            <person name="Munk A.C."/>
            <person name="Brettin T."/>
            <person name="Bruce D."/>
            <person name="Han C."/>
            <person name="Tapia R."/>
            <person name="Gilna P."/>
            <person name="Schmutz J."/>
            <person name="Larimer F."/>
            <person name="Land M."/>
            <person name="Hauser L."/>
            <person name="Kyrpides N."/>
            <person name="Mikhailova N."/>
            <person name="Fredrickson J."/>
            <person name="Richardson P."/>
        </authorList>
    </citation>
    <scope>NUCLEOTIDE SEQUENCE [LARGE SCALE GENOMIC DNA]</scope>
    <source>
        <strain>ATCC BAA-1098 / SB2B</strain>
    </source>
</reference>
<proteinExistence type="inferred from homology"/>
<dbReference type="EC" id="3.6.5.n1" evidence="1"/>
<dbReference type="EMBL" id="CP000507">
    <property type="protein sequence ID" value="ABL99085.1"/>
    <property type="molecule type" value="Genomic_DNA"/>
</dbReference>
<dbReference type="RefSeq" id="WP_011758995.1">
    <property type="nucleotide sequence ID" value="NC_008700.1"/>
</dbReference>
<dbReference type="SMR" id="A1S3X9"/>
<dbReference type="STRING" id="326297.Sama_0878"/>
<dbReference type="KEGG" id="saz:Sama_0878"/>
<dbReference type="eggNOG" id="COG0481">
    <property type="taxonomic scope" value="Bacteria"/>
</dbReference>
<dbReference type="HOGENOM" id="CLU_009995_3_3_6"/>
<dbReference type="OrthoDB" id="9804431at2"/>
<dbReference type="Proteomes" id="UP000009175">
    <property type="component" value="Chromosome"/>
</dbReference>
<dbReference type="GO" id="GO:0005886">
    <property type="term" value="C:plasma membrane"/>
    <property type="evidence" value="ECO:0007669"/>
    <property type="project" value="UniProtKB-SubCell"/>
</dbReference>
<dbReference type="GO" id="GO:0005525">
    <property type="term" value="F:GTP binding"/>
    <property type="evidence" value="ECO:0007669"/>
    <property type="project" value="UniProtKB-UniRule"/>
</dbReference>
<dbReference type="GO" id="GO:0003924">
    <property type="term" value="F:GTPase activity"/>
    <property type="evidence" value="ECO:0007669"/>
    <property type="project" value="UniProtKB-UniRule"/>
</dbReference>
<dbReference type="GO" id="GO:0097216">
    <property type="term" value="F:guanosine tetraphosphate binding"/>
    <property type="evidence" value="ECO:0007669"/>
    <property type="project" value="UniProtKB-ARBA"/>
</dbReference>
<dbReference type="GO" id="GO:0043022">
    <property type="term" value="F:ribosome binding"/>
    <property type="evidence" value="ECO:0007669"/>
    <property type="project" value="UniProtKB-UniRule"/>
</dbReference>
<dbReference type="GO" id="GO:0003746">
    <property type="term" value="F:translation elongation factor activity"/>
    <property type="evidence" value="ECO:0007669"/>
    <property type="project" value="UniProtKB-UniRule"/>
</dbReference>
<dbReference type="GO" id="GO:0045727">
    <property type="term" value="P:positive regulation of translation"/>
    <property type="evidence" value="ECO:0007669"/>
    <property type="project" value="UniProtKB-UniRule"/>
</dbReference>
<dbReference type="CDD" id="cd03699">
    <property type="entry name" value="EF4_II"/>
    <property type="match status" value="1"/>
</dbReference>
<dbReference type="CDD" id="cd16260">
    <property type="entry name" value="EF4_III"/>
    <property type="match status" value="1"/>
</dbReference>
<dbReference type="CDD" id="cd01890">
    <property type="entry name" value="LepA"/>
    <property type="match status" value="1"/>
</dbReference>
<dbReference type="CDD" id="cd03709">
    <property type="entry name" value="lepA_C"/>
    <property type="match status" value="1"/>
</dbReference>
<dbReference type="FunFam" id="3.40.50.300:FF:000078">
    <property type="entry name" value="Elongation factor 4"/>
    <property type="match status" value="1"/>
</dbReference>
<dbReference type="FunFam" id="2.40.30.10:FF:000015">
    <property type="entry name" value="Translation factor GUF1, mitochondrial"/>
    <property type="match status" value="1"/>
</dbReference>
<dbReference type="FunFam" id="3.30.70.240:FF:000007">
    <property type="entry name" value="Translation factor GUF1, mitochondrial"/>
    <property type="match status" value="1"/>
</dbReference>
<dbReference type="FunFam" id="3.30.70.2570:FF:000001">
    <property type="entry name" value="Translation factor GUF1, mitochondrial"/>
    <property type="match status" value="1"/>
</dbReference>
<dbReference type="FunFam" id="3.30.70.870:FF:000004">
    <property type="entry name" value="Translation factor GUF1, mitochondrial"/>
    <property type="match status" value="1"/>
</dbReference>
<dbReference type="Gene3D" id="3.30.70.240">
    <property type="match status" value="1"/>
</dbReference>
<dbReference type="Gene3D" id="3.30.70.2570">
    <property type="entry name" value="Elongation factor 4, C-terminal domain"/>
    <property type="match status" value="1"/>
</dbReference>
<dbReference type="Gene3D" id="3.30.70.870">
    <property type="entry name" value="Elongation Factor G (Translational Gtpase), domain 3"/>
    <property type="match status" value="1"/>
</dbReference>
<dbReference type="Gene3D" id="3.40.50.300">
    <property type="entry name" value="P-loop containing nucleotide triphosphate hydrolases"/>
    <property type="match status" value="1"/>
</dbReference>
<dbReference type="Gene3D" id="2.40.30.10">
    <property type="entry name" value="Translation factors"/>
    <property type="match status" value="1"/>
</dbReference>
<dbReference type="HAMAP" id="MF_00071">
    <property type="entry name" value="LepA"/>
    <property type="match status" value="1"/>
</dbReference>
<dbReference type="InterPro" id="IPR006297">
    <property type="entry name" value="EF-4"/>
</dbReference>
<dbReference type="InterPro" id="IPR035647">
    <property type="entry name" value="EFG_III/V"/>
</dbReference>
<dbReference type="InterPro" id="IPR000640">
    <property type="entry name" value="EFG_V-like"/>
</dbReference>
<dbReference type="InterPro" id="IPR004161">
    <property type="entry name" value="EFTu-like_2"/>
</dbReference>
<dbReference type="InterPro" id="IPR031157">
    <property type="entry name" value="G_TR_CS"/>
</dbReference>
<dbReference type="InterPro" id="IPR038363">
    <property type="entry name" value="LepA_C_sf"/>
</dbReference>
<dbReference type="InterPro" id="IPR013842">
    <property type="entry name" value="LepA_CTD"/>
</dbReference>
<dbReference type="InterPro" id="IPR035654">
    <property type="entry name" value="LepA_IV"/>
</dbReference>
<dbReference type="InterPro" id="IPR027417">
    <property type="entry name" value="P-loop_NTPase"/>
</dbReference>
<dbReference type="InterPro" id="IPR005225">
    <property type="entry name" value="Small_GTP-bd"/>
</dbReference>
<dbReference type="InterPro" id="IPR000795">
    <property type="entry name" value="T_Tr_GTP-bd_dom"/>
</dbReference>
<dbReference type="NCBIfam" id="TIGR01393">
    <property type="entry name" value="lepA"/>
    <property type="match status" value="1"/>
</dbReference>
<dbReference type="NCBIfam" id="TIGR00231">
    <property type="entry name" value="small_GTP"/>
    <property type="match status" value="1"/>
</dbReference>
<dbReference type="PANTHER" id="PTHR43512:SF4">
    <property type="entry name" value="TRANSLATION FACTOR GUF1 HOMOLOG, CHLOROPLASTIC"/>
    <property type="match status" value="1"/>
</dbReference>
<dbReference type="PANTHER" id="PTHR43512">
    <property type="entry name" value="TRANSLATION FACTOR GUF1-RELATED"/>
    <property type="match status" value="1"/>
</dbReference>
<dbReference type="Pfam" id="PF00679">
    <property type="entry name" value="EFG_C"/>
    <property type="match status" value="1"/>
</dbReference>
<dbReference type="Pfam" id="PF00009">
    <property type="entry name" value="GTP_EFTU"/>
    <property type="match status" value="1"/>
</dbReference>
<dbReference type="Pfam" id="PF03144">
    <property type="entry name" value="GTP_EFTU_D2"/>
    <property type="match status" value="1"/>
</dbReference>
<dbReference type="Pfam" id="PF06421">
    <property type="entry name" value="LepA_C"/>
    <property type="match status" value="1"/>
</dbReference>
<dbReference type="PRINTS" id="PR00315">
    <property type="entry name" value="ELONGATNFCT"/>
</dbReference>
<dbReference type="SMART" id="SM00838">
    <property type="entry name" value="EFG_C"/>
    <property type="match status" value="1"/>
</dbReference>
<dbReference type="SUPFAM" id="SSF54980">
    <property type="entry name" value="EF-G C-terminal domain-like"/>
    <property type="match status" value="2"/>
</dbReference>
<dbReference type="SUPFAM" id="SSF52540">
    <property type="entry name" value="P-loop containing nucleoside triphosphate hydrolases"/>
    <property type="match status" value="1"/>
</dbReference>
<dbReference type="PROSITE" id="PS00301">
    <property type="entry name" value="G_TR_1"/>
    <property type="match status" value="1"/>
</dbReference>
<dbReference type="PROSITE" id="PS51722">
    <property type="entry name" value="G_TR_2"/>
    <property type="match status" value="1"/>
</dbReference>